<reference key="1">
    <citation type="submission" date="2006-03" db="EMBL/GenBank/DDBJ databases">
        <title>Complete sequence of Shewanella denitrificans OS217.</title>
        <authorList>
            <consortium name="US DOE Joint Genome Institute"/>
            <person name="Copeland A."/>
            <person name="Lucas S."/>
            <person name="Lapidus A."/>
            <person name="Barry K."/>
            <person name="Detter J.C."/>
            <person name="Glavina del Rio T."/>
            <person name="Hammon N."/>
            <person name="Israni S."/>
            <person name="Dalin E."/>
            <person name="Tice H."/>
            <person name="Pitluck S."/>
            <person name="Brettin T."/>
            <person name="Bruce D."/>
            <person name="Han C."/>
            <person name="Tapia R."/>
            <person name="Gilna P."/>
            <person name="Kiss H."/>
            <person name="Schmutz J."/>
            <person name="Larimer F."/>
            <person name="Land M."/>
            <person name="Hauser L."/>
            <person name="Kyrpides N."/>
            <person name="Lykidis A."/>
            <person name="Richardson P."/>
        </authorList>
    </citation>
    <scope>NUCLEOTIDE SEQUENCE [LARGE SCALE GENOMIC DNA]</scope>
    <source>
        <strain>OS217 / ATCC BAA-1090 / DSM 15013</strain>
    </source>
</reference>
<organism>
    <name type="scientific">Shewanella denitrificans (strain OS217 / ATCC BAA-1090 / DSM 15013)</name>
    <dbReference type="NCBI Taxonomy" id="318161"/>
    <lineage>
        <taxon>Bacteria</taxon>
        <taxon>Pseudomonadati</taxon>
        <taxon>Pseudomonadota</taxon>
        <taxon>Gammaproteobacteria</taxon>
        <taxon>Alteromonadales</taxon>
        <taxon>Shewanellaceae</taxon>
        <taxon>Shewanella</taxon>
    </lineage>
</organism>
<gene>
    <name evidence="1" type="primary">astB</name>
    <name type="ordered locus">Sden_2329</name>
</gene>
<evidence type="ECO:0000255" key="1">
    <source>
        <dbReference type="HAMAP-Rule" id="MF_01172"/>
    </source>
</evidence>
<protein>
    <recommendedName>
        <fullName evidence="1">N-succinylarginine dihydrolase</fullName>
        <ecNumber evidence="1">3.5.3.23</ecNumber>
    </recommendedName>
</protein>
<sequence length="444" mass="48882">MKHFEANFDGLVGPTHNYAGLSFGNVASYSNAAQTANPKAAAKQGLQKAKALADLGMTQGVLAPQERPDLYTLRRIGFSGSDAEVIQKAAKQAPALLNACCSASSMWTANAATVSPSADTRDGKVHFTPANLVDKLHRSIEPITTANILKATFKDPHFFQHHAHLPEHAHFGDEGAANHTRLCGEYGHSGVELFVYGQEATNPNAPKPKKYPARQTLEASQAIARLHQLEDESTVFMQQNPDVIDQGVFHNDVISVGNQNVLFYHEQAFLNTDAKFDEIRRKMNADMHFVKVATSQVSIDDAVKSYLFNTQIITLPSGEMTIIAPTDCQENLAVFAYLNELVTLGTPIKQVRYYDVKQSMQNGGGPACLRLRVALNDQELAAVNQDTLMNDALFGRLNTWVEKHYRDSLSVKDLADPQLIVESRTALDELTQILKLGSVYQFQK</sequence>
<accession>Q12LR7</accession>
<name>ASTB_SHEDO</name>
<comment type="function">
    <text evidence="1">Catalyzes the hydrolysis of N(2)-succinylarginine into N(2)-succinylornithine, ammonia and CO(2).</text>
</comment>
<comment type="catalytic activity">
    <reaction evidence="1">
        <text>N(2)-succinyl-L-arginine + 2 H2O + 2 H(+) = N(2)-succinyl-L-ornithine + 2 NH4(+) + CO2</text>
        <dbReference type="Rhea" id="RHEA:19533"/>
        <dbReference type="ChEBI" id="CHEBI:15377"/>
        <dbReference type="ChEBI" id="CHEBI:15378"/>
        <dbReference type="ChEBI" id="CHEBI:16526"/>
        <dbReference type="ChEBI" id="CHEBI:28938"/>
        <dbReference type="ChEBI" id="CHEBI:58241"/>
        <dbReference type="ChEBI" id="CHEBI:58514"/>
        <dbReference type="EC" id="3.5.3.23"/>
    </reaction>
</comment>
<comment type="pathway">
    <text evidence="1">Amino-acid degradation; L-arginine degradation via AST pathway; L-glutamate and succinate from L-arginine: step 2/5.</text>
</comment>
<comment type="subunit">
    <text evidence="1">Homodimer.</text>
</comment>
<comment type="similarity">
    <text evidence="1">Belongs to the succinylarginine dihydrolase family.</text>
</comment>
<feature type="chain" id="PRO_0000262374" description="N-succinylarginine dihydrolase">
    <location>
        <begin position="1"/>
        <end position="444"/>
    </location>
</feature>
<feature type="active site" evidence="1">
    <location>
        <position position="174"/>
    </location>
</feature>
<feature type="active site" evidence="1">
    <location>
        <position position="250"/>
    </location>
</feature>
<feature type="active site" description="Nucleophile" evidence="1">
    <location>
        <position position="368"/>
    </location>
</feature>
<feature type="binding site" evidence="1">
    <location>
        <begin position="19"/>
        <end position="28"/>
    </location>
    <ligand>
        <name>substrate</name>
    </ligand>
</feature>
<feature type="binding site" evidence="1">
    <location>
        <position position="110"/>
    </location>
    <ligand>
        <name>substrate</name>
    </ligand>
</feature>
<feature type="binding site" evidence="1">
    <location>
        <begin position="137"/>
        <end position="138"/>
    </location>
    <ligand>
        <name>substrate</name>
    </ligand>
</feature>
<feature type="binding site" evidence="1">
    <location>
        <position position="214"/>
    </location>
    <ligand>
        <name>substrate</name>
    </ligand>
</feature>
<feature type="binding site" evidence="1">
    <location>
        <position position="252"/>
    </location>
    <ligand>
        <name>substrate</name>
    </ligand>
</feature>
<feature type="binding site" evidence="1">
    <location>
        <position position="362"/>
    </location>
    <ligand>
        <name>substrate</name>
    </ligand>
</feature>
<proteinExistence type="inferred from homology"/>
<dbReference type="EC" id="3.5.3.23" evidence="1"/>
<dbReference type="EMBL" id="CP000302">
    <property type="protein sequence ID" value="ABE55609.1"/>
    <property type="molecule type" value="Genomic_DNA"/>
</dbReference>
<dbReference type="RefSeq" id="WP_011496760.1">
    <property type="nucleotide sequence ID" value="NC_007954.1"/>
</dbReference>
<dbReference type="SMR" id="Q12LR7"/>
<dbReference type="STRING" id="318161.Sden_2329"/>
<dbReference type="KEGG" id="sdn:Sden_2329"/>
<dbReference type="eggNOG" id="COG3724">
    <property type="taxonomic scope" value="Bacteria"/>
</dbReference>
<dbReference type="HOGENOM" id="CLU_053835_0_0_6"/>
<dbReference type="OrthoDB" id="248552at2"/>
<dbReference type="UniPathway" id="UPA00185">
    <property type="reaction ID" value="UER00280"/>
</dbReference>
<dbReference type="Proteomes" id="UP000001982">
    <property type="component" value="Chromosome"/>
</dbReference>
<dbReference type="GO" id="GO:0009015">
    <property type="term" value="F:N-succinylarginine dihydrolase activity"/>
    <property type="evidence" value="ECO:0007669"/>
    <property type="project" value="UniProtKB-UniRule"/>
</dbReference>
<dbReference type="GO" id="GO:0019544">
    <property type="term" value="P:arginine catabolic process to glutamate"/>
    <property type="evidence" value="ECO:0007669"/>
    <property type="project" value="UniProtKB-UniRule"/>
</dbReference>
<dbReference type="GO" id="GO:0019545">
    <property type="term" value="P:arginine catabolic process to succinate"/>
    <property type="evidence" value="ECO:0007669"/>
    <property type="project" value="UniProtKB-UniRule"/>
</dbReference>
<dbReference type="Gene3D" id="3.75.10.20">
    <property type="entry name" value="Succinylarginine dihydrolase"/>
    <property type="match status" value="1"/>
</dbReference>
<dbReference type="HAMAP" id="MF_01172">
    <property type="entry name" value="AstB"/>
    <property type="match status" value="1"/>
</dbReference>
<dbReference type="InterPro" id="IPR037031">
    <property type="entry name" value="AstB_sf"/>
</dbReference>
<dbReference type="InterPro" id="IPR007079">
    <property type="entry name" value="SuccinylArg_d-Hdrlase_AstB"/>
</dbReference>
<dbReference type="NCBIfam" id="TIGR03241">
    <property type="entry name" value="arg_catab_astB"/>
    <property type="match status" value="1"/>
</dbReference>
<dbReference type="NCBIfam" id="NF009789">
    <property type="entry name" value="PRK13281.1"/>
    <property type="match status" value="1"/>
</dbReference>
<dbReference type="PANTHER" id="PTHR30420">
    <property type="entry name" value="N-SUCCINYLARGININE DIHYDROLASE"/>
    <property type="match status" value="1"/>
</dbReference>
<dbReference type="PANTHER" id="PTHR30420:SF2">
    <property type="entry name" value="N-SUCCINYLARGININE DIHYDROLASE"/>
    <property type="match status" value="1"/>
</dbReference>
<dbReference type="Pfam" id="PF04996">
    <property type="entry name" value="AstB"/>
    <property type="match status" value="1"/>
</dbReference>
<dbReference type="SUPFAM" id="SSF55909">
    <property type="entry name" value="Pentein"/>
    <property type="match status" value="1"/>
</dbReference>
<keyword id="KW-0056">Arginine metabolism</keyword>
<keyword id="KW-0378">Hydrolase</keyword>
<keyword id="KW-1185">Reference proteome</keyword>